<dbReference type="EMBL" id="BX248583">
    <property type="protein sequence ID" value="CAD83701.1"/>
    <property type="molecule type" value="Genomic_DNA"/>
</dbReference>
<dbReference type="SMR" id="Q7VQF3"/>
<dbReference type="STRING" id="203907.Bfl182"/>
<dbReference type="KEGG" id="bfl:Bfl182"/>
<dbReference type="eggNOG" id="COG0542">
    <property type="taxonomic scope" value="Bacteria"/>
</dbReference>
<dbReference type="HOGENOM" id="CLU_005070_4_1_6"/>
<dbReference type="OrthoDB" id="9803641at2"/>
<dbReference type="Proteomes" id="UP000002192">
    <property type="component" value="Chromosome"/>
</dbReference>
<dbReference type="GO" id="GO:0005737">
    <property type="term" value="C:cytoplasm"/>
    <property type="evidence" value="ECO:0007669"/>
    <property type="project" value="UniProtKB-SubCell"/>
</dbReference>
<dbReference type="GO" id="GO:0005524">
    <property type="term" value="F:ATP binding"/>
    <property type="evidence" value="ECO:0007669"/>
    <property type="project" value="UniProtKB-KW"/>
</dbReference>
<dbReference type="GO" id="GO:0016887">
    <property type="term" value="F:ATP hydrolysis activity"/>
    <property type="evidence" value="ECO:0007669"/>
    <property type="project" value="InterPro"/>
</dbReference>
<dbReference type="GO" id="GO:0034605">
    <property type="term" value="P:cellular response to heat"/>
    <property type="evidence" value="ECO:0007669"/>
    <property type="project" value="TreeGrafter"/>
</dbReference>
<dbReference type="GO" id="GO:0042026">
    <property type="term" value="P:protein refolding"/>
    <property type="evidence" value="ECO:0007669"/>
    <property type="project" value="InterPro"/>
</dbReference>
<dbReference type="CDD" id="cd00009">
    <property type="entry name" value="AAA"/>
    <property type="match status" value="1"/>
</dbReference>
<dbReference type="CDD" id="cd19499">
    <property type="entry name" value="RecA-like_ClpB_Hsp104-like"/>
    <property type="match status" value="1"/>
</dbReference>
<dbReference type="FunFam" id="3.40.50.300:FF:000120">
    <property type="entry name" value="ATP-dependent chaperone ClpB"/>
    <property type="match status" value="1"/>
</dbReference>
<dbReference type="FunFam" id="3.40.50.300:FF:000025">
    <property type="entry name" value="ATP-dependent Clp protease subunit"/>
    <property type="match status" value="1"/>
</dbReference>
<dbReference type="FunFam" id="3.40.50.300:FF:000010">
    <property type="entry name" value="Chaperone clpB 1, putative"/>
    <property type="match status" value="1"/>
</dbReference>
<dbReference type="Gene3D" id="1.10.8.60">
    <property type="match status" value="1"/>
</dbReference>
<dbReference type="Gene3D" id="1.10.1780.10">
    <property type="entry name" value="Clp, N-terminal domain"/>
    <property type="match status" value="1"/>
</dbReference>
<dbReference type="Gene3D" id="3.40.50.300">
    <property type="entry name" value="P-loop containing nucleotide triphosphate hydrolases"/>
    <property type="match status" value="3"/>
</dbReference>
<dbReference type="InterPro" id="IPR003593">
    <property type="entry name" value="AAA+_ATPase"/>
</dbReference>
<dbReference type="InterPro" id="IPR003959">
    <property type="entry name" value="ATPase_AAA_core"/>
</dbReference>
<dbReference type="InterPro" id="IPR017730">
    <property type="entry name" value="Chaperonin_ClpB"/>
</dbReference>
<dbReference type="InterPro" id="IPR019489">
    <property type="entry name" value="Clp_ATPase_C"/>
</dbReference>
<dbReference type="InterPro" id="IPR036628">
    <property type="entry name" value="Clp_N_dom_sf"/>
</dbReference>
<dbReference type="InterPro" id="IPR004176">
    <property type="entry name" value="Clp_R_dom"/>
</dbReference>
<dbReference type="InterPro" id="IPR001270">
    <property type="entry name" value="ClpA/B"/>
</dbReference>
<dbReference type="InterPro" id="IPR018368">
    <property type="entry name" value="ClpA/B_CS1"/>
</dbReference>
<dbReference type="InterPro" id="IPR028299">
    <property type="entry name" value="ClpA/B_CS2"/>
</dbReference>
<dbReference type="InterPro" id="IPR041546">
    <property type="entry name" value="ClpA/ClpB_AAA_lid"/>
</dbReference>
<dbReference type="InterPro" id="IPR050130">
    <property type="entry name" value="ClpA_ClpB"/>
</dbReference>
<dbReference type="InterPro" id="IPR027417">
    <property type="entry name" value="P-loop_NTPase"/>
</dbReference>
<dbReference type="NCBIfam" id="TIGR03346">
    <property type="entry name" value="chaperone_ClpB"/>
    <property type="match status" value="1"/>
</dbReference>
<dbReference type="NCBIfam" id="NF008118">
    <property type="entry name" value="PRK10865.1"/>
    <property type="match status" value="1"/>
</dbReference>
<dbReference type="PANTHER" id="PTHR11638">
    <property type="entry name" value="ATP-DEPENDENT CLP PROTEASE"/>
    <property type="match status" value="1"/>
</dbReference>
<dbReference type="PANTHER" id="PTHR11638:SF18">
    <property type="entry name" value="HEAT SHOCK PROTEIN 104"/>
    <property type="match status" value="1"/>
</dbReference>
<dbReference type="Pfam" id="PF00004">
    <property type="entry name" value="AAA"/>
    <property type="match status" value="1"/>
</dbReference>
<dbReference type="Pfam" id="PF07724">
    <property type="entry name" value="AAA_2"/>
    <property type="match status" value="1"/>
</dbReference>
<dbReference type="Pfam" id="PF17871">
    <property type="entry name" value="AAA_lid_9"/>
    <property type="match status" value="1"/>
</dbReference>
<dbReference type="Pfam" id="PF02861">
    <property type="entry name" value="Clp_N"/>
    <property type="match status" value="1"/>
</dbReference>
<dbReference type="Pfam" id="PF10431">
    <property type="entry name" value="ClpB_D2-small"/>
    <property type="match status" value="1"/>
</dbReference>
<dbReference type="PRINTS" id="PR00300">
    <property type="entry name" value="CLPPROTEASEA"/>
</dbReference>
<dbReference type="SMART" id="SM00382">
    <property type="entry name" value="AAA"/>
    <property type="match status" value="2"/>
</dbReference>
<dbReference type="SMART" id="SM01086">
    <property type="entry name" value="ClpB_D2-small"/>
    <property type="match status" value="1"/>
</dbReference>
<dbReference type="SUPFAM" id="SSF81923">
    <property type="entry name" value="Double Clp-N motif"/>
    <property type="match status" value="1"/>
</dbReference>
<dbReference type="SUPFAM" id="SSF52540">
    <property type="entry name" value="P-loop containing nucleoside triphosphate hydrolases"/>
    <property type="match status" value="2"/>
</dbReference>
<dbReference type="PROSITE" id="PS51903">
    <property type="entry name" value="CLP_R"/>
    <property type="match status" value="1"/>
</dbReference>
<dbReference type="PROSITE" id="PS00870">
    <property type="entry name" value="CLPAB_1"/>
    <property type="match status" value="1"/>
</dbReference>
<dbReference type="PROSITE" id="PS00871">
    <property type="entry name" value="CLPAB_2"/>
    <property type="match status" value="1"/>
</dbReference>
<feature type="chain" id="PRO_0000191102" description="Chaperone protein ClpB">
    <location>
        <begin position="1"/>
        <end position="872"/>
    </location>
</feature>
<feature type="domain" description="Clp R" evidence="2">
    <location>
        <begin position="3"/>
        <end position="149"/>
    </location>
</feature>
<feature type="region of interest" description="Repeat 1" evidence="2">
    <location>
        <begin position="6"/>
        <end position="72"/>
    </location>
</feature>
<feature type="region of interest" description="Repeat 2" evidence="2">
    <location>
        <begin position="86"/>
        <end position="149"/>
    </location>
</feature>
<feature type="region of interest" description="NBD1" evidence="1">
    <location>
        <begin position="162"/>
        <end position="342"/>
    </location>
</feature>
<feature type="region of interest" description="Linker" evidence="1">
    <location>
        <begin position="343"/>
        <end position="547"/>
    </location>
</feature>
<feature type="region of interest" description="NBD2" evidence="1">
    <location>
        <begin position="557"/>
        <end position="767"/>
    </location>
</feature>
<feature type="region of interest" description="C-terminal" evidence="1">
    <location>
        <begin position="768"/>
        <end position="872"/>
    </location>
</feature>
<feature type="coiled-coil region" evidence="1">
    <location>
        <begin position="393"/>
        <end position="525"/>
    </location>
</feature>
<feature type="binding site" evidence="1">
    <location>
        <begin position="209"/>
        <end position="216"/>
    </location>
    <ligand>
        <name>ATP</name>
        <dbReference type="ChEBI" id="CHEBI:30616"/>
        <label>1</label>
    </ligand>
</feature>
<feature type="binding site" evidence="1">
    <location>
        <begin position="607"/>
        <end position="614"/>
    </location>
    <ligand>
        <name>ATP</name>
        <dbReference type="ChEBI" id="CHEBI:30616"/>
        <label>2</label>
    </ligand>
</feature>
<reference key="1">
    <citation type="journal article" date="2003" name="Proc. Natl. Acad. Sci. U.S.A.">
        <title>The genome sequence of Blochmannia floridanus: comparative analysis of reduced genomes.</title>
        <authorList>
            <person name="Gil R."/>
            <person name="Silva F.J."/>
            <person name="Zientz E."/>
            <person name="Delmotte F."/>
            <person name="Gonzalez-Candelas F."/>
            <person name="Latorre A."/>
            <person name="Rausell C."/>
            <person name="Kamerbeek J."/>
            <person name="Gadau J."/>
            <person name="Hoelldobler B."/>
            <person name="van Ham R.C.H.J."/>
            <person name="Gross R."/>
            <person name="Moya A."/>
        </authorList>
    </citation>
    <scope>NUCLEOTIDE SEQUENCE [LARGE SCALE GENOMIC DNA]</scope>
</reference>
<comment type="function">
    <text evidence="1">Part of a stress-induced multi-chaperone system, it is involved in the recovery of the cell from heat-induced damage, in cooperation with DnaK, DnaJ and GrpE. Acts before DnaK, in the processing of protein aggregates. Protein binding stimulates the ATPase activity; ATP hydrolysis unfolds the denatured protein aggregates, which probably helps expose new hydrophobic binding sites on the surface of ClpB-bound aggregates, contributing to the solubilization and refolding of denatured protein aggregates by DnaK (By similarity).</text>
</comment>
<comment type="subunit">
    <text evidence="1">Homohexamer. The oligomerization is ATP-dependent (By similarity).</text>
</comment>
<comment type="subcellular location">
    <subcellularLocation>
        <location evidence="3">Cytoplasm</location>
    </subcellularLocation>
</comment>
<comment type="domain">
    <text evidence="1">The Clp repeat (R) domain probably functions as a substrate-discriminating domain, recruiting aggregated proteins to the ClpB hexamer and/or stabilizing bound proteins. The NBD2 domain is responsible for oligomerization, whereas the NBD1 domain stabilizes the hexamer probably in an ATP-dependent manner. The movement of the coiled-coil domain is essential for ClpB ability to rescue proteins from an aggregated state, probably by pulling apart large aggregated proteins, which are bound between the coiled-coils motifs of adjacent ClpB subunits in the functional hexamer (By similarity).</text>
</comment>
<comment type="similarity">
    <text evidence="3">Belongs to the ClpA/ClpB family.</text>
</comment>
<accession>Q7VQF3</accession>
<evidence type="ECO:0000250" key="1"/>
<evidence type="ECO:0000255" key="2">
    <source>
        <dbReference type="PROSITE-ProRule" id="PRU01251"/>
    </source>
</evidence>
<evidence type="ECO:0000305" key="3"/>
<keyword id="KW-0067">ATP-binding</keyword>
<keyword id="KW-0143">Chaperone</keyword>
<keyword id="KW-0175">Coiled coil</keyword>
<keyword id="KW-0963">Cytoplasm</keyword>
<keyword id="KW-0547">Nucleotide-binding</keyword>
<keyword id="KW-1185">Reference proteome</keyword>
<keyword id="KW-0677">Repeat</keyword>
<keyword id="KW-0346">Stress response</keyword>
<organism>
    <name type="scientific">Blochmanniella floridana</name>
    <dbReference type="NCBI Taxonomy" id="203907"/>
    <lineage>
        <taxon>Bacteria</taxon>
        <taxon>Pseudomonadati</taxon>
        <taxon>Pseudomonadota</taxon>
        <taxon>Gammaproteobacteria</taxon>
        <taxon>Enterobacterales</taxon>
        <taxon>Enterobacteriaceae</taxon>
        <taxon>ant endosymbionts</taxon>
        <taxon>Candidatus Blochmanniella</taxon>
    </lineage>
</organism>
<protein>
    <recommendedName>
        <fullName>Chaperone protein ClpB</fullName>
    </recommendedName>
</protein>
<name>CLPB_BLOFL</name>
<proteinExistence type="inferred from homology"/>
<sequence length="872" mass="99659">MRLDRFDRSFQLALSDAQSIAIGKDNQFIEPVHVMYTFLKEKKYKSIRNLLIHAGSNVDQLYKSVEQVCNDLPRVESVDGDREVQCSHALVKILNLCDKLAQKYHSNIIFSEVFIIAALQSQDVLSILLKKSGIVKELLEKLVQYEQSNYSIHDDSFKNRTQILEQFTVDITSLAEQNNLDPVIGRDEEIRRTIQVLQRRTKNNPVLIGNPGVGKTAIVEGLAQRIINKEVPEGLKNSRILSLDIAALLAGTKYRGEFEERFKKVLYAVSKDNNTILFIDELHVMVGAGKTDGSMDASNMIKPKLARGELHCVGATTLDEYSRYIEKDAALERRFQKIFIIEPNIENTIAILRGLKERYELHHNVHITDPAIVAAATLSNRYISDRQLPDKAIDLIDEAASSIRIQIDSKPEDLDRLDRRIIQLKLECQALKKESDELSKKRLEILSMELSQKEQEYSVLESEWKRERSSLFDIQNIKSDLEKAKTILDQSRRIGDLAQMSELQYGRIPELEKKLFNAIQSSNKKMRLLRNYVSEVEIAEVLSKWTGIPISRILANEKNKLLNMETILHQLVIGQDEAVRVISNAIRRSRSGLSDPKRPIGSFMFLGPTGVGKTELCKALSQFLFDTDNAMVRIDMSEFMEKHSVSKLLGAPPGYIGYESGAYLTESIRRRPYSIVLLDEIEKAHLDVFNILLQVLDDGRLTDNQGRMVDFNNTVIIMTSNLGSDLIQKKFDISDYDTMKKTVLNVVNQYFRPEFINRIDEIVVFHPLSIKHLIDIANIQLKYLYSRLEERGYPRTGITNKALLFLSKIGFDPIYGARPLKRIIQQYIENPLSQKILSDDLLPGRSITIDVQNDNIVFIQNDVIDDKDIYIN</sequence>
<gene>
    <name type="primary">clpB</name>
    <name type="ordered locus">Bfl182</name>
</gene>